<comment type="function">
    <text evidence="2">Catalyzes the formation of N(7)-methylguanine at position 46 (m7G46) in tRNA.</text>
</comment>
<comment type="catalytic activity">
    <reaction evidence="2">
        <text>guanosine(46) in tRNA + S-adenosyl-L-methionine = N(7)-methylguanosine(46) in tRNA + S-adenosyl-L-homocysteine</text>
        <dbReference type="Rhea" id="RHEA:42708"/>
        <dbReference type="Rhea" id="RHEA-COMP:10188"/>
        <dbReference type="Rhea" id="RHEA-COMP:10189"/>
        <dbReference type="ChEBI" id="CHEBI:57856"/>
        <dbReference type="ChEBI" id="CHEBI:59789"/>
        <dbReference type="ChEBI" id="CHEBI:74269"/>
        <dbReference type="ChEBI" id="CHEBI:74480"/>
        <dbReference type="EC" id="2.1.1.33"/>
    </reaction>
</comment>
<comment type="pathway">
    <text evidence="2">tRNA modification; N(7)-methylguanine-tRNA biosynthesis.</text>
</comment>
<comment type="similarity">
    <text evidence="2">Belongs to the class I-like SAM-binding methyltransferase superfamily. TrmB family.</text>
</comment>
<reference key="1">
    <citation type="journal article" date="2004" name="PLoS Biol.">
        <title>Phylogenomics of the reproductive parasite Wolbachia pipientis wMel: a streamlined genome overrun by mobile genetic elements.</title>
        <authorList>
            <person name="Wu M."/>
            <person name="Sun L.V."/>
            <person name="Vamathevan J.J."/>
            <person name="Riegler M."/>
            <person name="DeBoy R.T."/>
            <person name="Brownlie J.C."/>
            <person name="McGraw E.A."/>
            <person name="Martin W."/>
            <person name="Esser C."/>
            <person name="Ahmadinejad N."/>
            <person name="Wiegand C."/>
            <person name="Madupu R."/>
            <person name="Beanan M.J."/>
            <person name="Brinkac L.M."/>
            <person name="Daugherty S.C."/>
            <person name="Durkin A.S."/>
            <person name="Kolonay J.F."/>
            <person name="Nelson W.C."/>
            <person name="Mohamoud Y."/>
            <person name="Lee P."/>
            <person name="Berry K.J."/>
            <person name="Young M.B."/>
            <person name="Utterback T.R."/>
            <person name="Weidman J.F."/>
            <person name="Nierman W.C."/>
            <person name="Paulsen I.T."/>
            <person name="Nelson K.E."/>
            <person name="Tettelin H."/>
            <person name="O'Neill S.L."/>
            <person name="Eisen J.A."/>
        </authorList>
    </citation>
    <scope>NUCLEOTIDE SEQUENCE [LARGE SCALE GENOMIC DNA]</scope>
</reference>
<evidence type="ECO:0000250" key="1"/>
<evidence type="ECO:0000255" key="2">
    <source>
        <dbReference type="HAMAP-Rule" id="MF_01057"/>
    </source>
</evidence>
<proteinExistence type="inferred from homology"/>
<keyword id="KW-0489">Methyltransferase</keyword>
<keyword id="KW-0949">S-adenosyl-L-methionine</keyword>
<keyword id="KW-0808">Transferase</keyword>
<keyword id="KW-0819">tRNA processing</keyword>
<sequence length="221" mass="26251">MLFKNSKWIGSFSRRSRLKPDVDEILEKYSIQNSKESIEKIVNSQKRIWVEIGFGNGENMLYQVLNEPDLLFIGCEPYLKGVSRLLTNIEIQNIKNILMWTEDARELIANFPDNSVERFFILFPDPWPKRSHNKRRLINTEFLNLLAKKILITGEIFIATDHQDYAEWIASHIKQCNSLIYREDDFTSYTLTKYHRRALKDQRKVRFFKVSVINNLQTMDQ</sequence>
<feature type="chain" id="PRO_0000171422" description="tRNA (guanine-N(7)-)-methyltransferase">
    <location>
        <begin position="1"/>
        <end position="221"/>
    </location>
</feature>
<feature type="active site" evidence="1">
    <location>
        <position position="125"/>
    </location>
</feature>
<feature type="binding site" evidence="2">
    <location>
        <position position="51"/>
    </location>
    <ligand>
        <name>S-adenosyl-L-methionine</name>
        <dbReference type="ChEBI" id="CHEBI:59789"/>
    </ligand>
</feature>
<feature type="binding site" evidence="2">
    <location>
        <position position="76"/>
    </location>
    <ligand>
        <name>S-adenosyl-L-methionine</name>
        <dbReference type="ChEBI" id="CHEBI:59789"/>
    </ligand>
</feature>
<feature type="binding site" evidence="2">
    <location>
        <position position="103"/>
    </location>
    <ligand>
        <name>S-adenosyl-L-methionine</name>
        <dbReference type="ChEBI" id="CHEBI:59789"/>
    </ligand>
</feature>
<feature type="binding site" evidence="2">
    <location>
        <position position="125"/>
    </location>
    <ligand>
        <name>S-adenosyl-L-methionine</name>
        <dbReference type="ChEBI" id="CHEBI:59789"/>
    </ligand>
</feature>
<feature type="binding site" evidence="2">
    <location>
        <position position="129"/>
    </location>
    <ligand>
        <name>substrate</name>
    </ligand>
</feature>
<feature type="binding site" evidence="2">
    <location>
        <position position="161"/>
    </location>
    <ligand>
        <name>substrate</name>
    </ligand>
</feature>
<protein>
    <recommendedName>
        <fullName evidence="2">tRNA (guanine-N(7)-)-methyltransferase</fullName>
        <ecNumber evidence="2">2.1.1.33</ecNumber>
    </recommendedName>
    <alternativeName>
        <fullName evidence="2">tRNA (guanine(46)-N(7))-methyltransferase</fullName>
    </alternativeName>
    <alternativeName>
        <fullName evidence="2">tRNA(m7G46)-methyltransferase</fullName>
    </alternativeName>
</protein>
<accession>Q73G71</accession>
<dbReference type="EC" id="2.1.1.33" evidence="2"/>
<dbReference type="EMBL" id="AE017196">
    <property type="protein sequence ID" value="AAS14746.1"/>
    <property type="molecule type" value="Genomic_DNA"/>
</dbReference>
<dbReference type="RefSeq" id="WP_010963037.1">
    <property type="nucleotide sequence ID" value="NZ_OX384529.1"/>
</dbReference>
<dbReference type="SMR" id="Q73G71"/>
<dbReference type="EnsemblBacteria" id="AAS14746">
    <property type="protein sequence ID" value="AAS14746"/>
    <property type="gene ID" value="WD_1091"/>
</dbReference>
<dbReference type="GeneID" id="70036566"/>
<dbReference type="KEGG" id="wol:WD_1091"/>
<dbReference type="eggNOG" id="COG0220">
    <property type="taxonomic scope" value="Bacteria"/>
</dbReference>
<dbReference type="UniPathway" id="UPA00989"/>
<dbReference type="Proteomes" id="UP000008215">
    <property type="component" value="Chromosome"/>
</dbReference>
<dbReference type="GO" id="GO:0043527">
    <property type="term" value="C:tRNA methyltransferase complex"/>
    <property type="evidence" value="ECO:0007669"/>
    <property type="project" value="TreeGrafter"/>
</dbReference>
<dbReference type="GO" id="GO:0008176">
    <property type="term" value="F:tRNA (guanine(46)-N7)-methyltransferase activity"/>
    <property type="evidence" value="ECO:0007669"/>
    <property type="project" value="UniProtKB-UniRule"/>
</dbReference>
<dbReference type="Gene3D" id="3.40.50.150">
    <property type="entry name" value="Vaccinia Virus protein VP39"/>
    <property type="match status" value="1"/>
</dbReference>
<dbReference type="HAMAP" id="MF_01057">
    <property type="entry name" value="tRNA_methyltr_TrmB"/>
    <property type="match status" value="1"/>
</dbReference>
<dbReference type="InterPro" id="IPR029063">
    <property type="entry name" value="SAM-dependent_MTases_sf"/>
</dbReference>
<dbReference type="InterPro" id="IPR003358">
    <property type="entry name" value="tRNA_(Gua-N-7)_MeTrfase_Trmb"/>
</dbReference>
<dbReference type="InterPro" id="IPR055361">
    <property type="entry name" value="tRNA_methyltr_TrmB_bact"/>
</dbReference>
<dbReference type="NCBIfam" id="TIGR00091">
    <property type="entry name" value="tRNA (guanosine(46)-N7)-methyltransferase TrmB"/>
    <property type="match status" value="1"/>
</dbReference>
<dbReference type="PANTHER" id="PTHR23417">
    <property type="entry name" value="3-DEOXY-D-MANNO-OCTULOSONIC-ACID TRANSFERASE/TRNA GUANINE-N 7 - -METHYLTRANSFERASE"/>
    <property type="match status" value="1"/>
</dbReference>
<dbReference type="PANTHER" id="PTHR23417:SF14">
    <property type="entry name" value="PENTACOTRIPEPTIDE-REPEAT REGION OF PRORP DOMAIN-CONTAINING PROTEIN"/>
    <property type="match status" value="1"/>
</dbReference>
<dbReference type="Pfam" id="PF02390">
    <property type="entry name" value="Methyltransf_4"/>
    <property type="match status" value="1"/>
</dbReference>
<dbReference type="SUPFAM" id="SSF53335">
    <property type="entry name" value="S-adenosyl-L-methionine-dependent methyltransferases"/>
    <property type="match status" value="1"/>
</dbReference>
<dbReference type="PROSITE" id="PS51625">
    <property type="entry name" value="SAM_MT_TRMB"/>
    <property type="match status" value="1"/>
</dbReference>
<organism>
    <name type="scientific">Wolbachia pipientis wMel</name>
    <dbReference type="NCBI Taxonomy" id="163164"/>
    <lineage>
        <taxon>Bacteria</taxon>
        <taxon>Pseudomonadati</taxon>
        <taxon>Pseudomonadota</taxon>
        <taxon>Alphaproteobacteria</taxon>
        <taxon>Rickettsiales</taxon>
        <taxon>Anaplasmataceae</taxon>
        <taxon>Wolbachieae</taxon>
        <taxon>Wolbachia</taxon>
    </lineage>
</organism>
<name>TRMB_WOLPM</name>
<gene>
    <name evidence="2" type="primary">trmB</name>
    <name type="ordered locus">WD_1091</name>
</gene>